<name>RUVB_STAAM</name>
<protein>
    <recommendedName>
        <fullName evidence="1">Holliday junction branch migration complex subunit RuvB</fullName>
        <ecNumber evidence="1">3.6.4.-</ecNumber>
    </recommendedName>
</protein>
<evidence type="ECO:0000255" key="1">
    <source>
        <dbReference type="HAMAP-Rule" id="MF_00016"/>
    </source>
</evidence>
<accession>P66757</accession>
<accession>Q99TL2</accession>
<keyword id="KW-0067">ATP-binding</keyword>
<keyword id="KW-0963">Cytoplasm</keyword>
<keyword id="KW-0227">DNA damage</keyword>
<keyword id="KW-0233">DNA recombination</keyword>
<keyword id="KW-0234">DNA repair</keyword>
<keyword id="KW-0238">DNA-binding</keyword>
<keyword id="KW-0378">Hydrolase</keyword>
<keyword id="KW-0547">Nucleotide-binding</keyword>
<proteinExistence type="inferred from homology"/>
<feature type="chain" id="PRO_0000165595" description="Holliday junction branch migration complex subunit RuvB">
    <location>
        <begin position="1"/>
        <end position="334"/>
    </location>
</feature>
<feature type="region of interest" description="Large ATPase domain (RuvB-L)" evidence="1">
    <location>
        <begin position="1"/>
        <end position="182"/>
    </location>
</feature>
<feature type="region of interest" description="Small ATPAse domain (RuvB-S)" evidence="1">
    <location>
        <begin position="183"/>
        <end position="253"/>
    </location>
</feature>
<feature type="region of interest" description="Head domain (RuvB-H)" evidence="1">
    <location>
        <begin position="256"/>
        <end position="334"/>
    </location>
</feature>
<feature type="binding site" evidence="1">
    <location>
        <position position="21"/>
    </location>
    <ligand>
        <name>ATP</name>
        <dbReference type="ChEBI" id="CHEBI:30616"/>
    </ligand>
</feature>
<feature type="binding site" evidence="1">
    <location>
        <position position="22"/>
    </location>
    <ligand>
        <name>ATP</name>
        <dbReference type="ChEBI" id="CHEBI:30616"/>
    </ligand>
</feature>
<feature type="binding site" evidence="1">
    <location>
        <position position="63"/>
    </location>
    <ligand>
        <name>ATP</name>
        <dbReference type="ChEBI" id="CHEBI:30616"/>
    </ligand>
</feature>
<feature type="binding site" evidence="1">
    <location>
        <position position="66"/>
    </location>
    <ligand>
        <name>ATP</name>
        <dbReference type="ChEBI" id="CHEBI:30616"/>
    </ligand>
</feature>
<feature type="binding site" evidence="1">
    <location>
        <position position="67"/>
    </location>
    <ligand>
        <name>ATP</name>
        <dbReference type="ChEBI" id="CHEBI:30616"/>
    </ligand>
</feature>
<feature type="binding site" evidence="1">
    <location>
        <position position="67"/>
    </location>
    <ligand>
        <name>Mg(2+)</name>
        <dbReference type="ChEBI" id="CHEBI:18420"/>
    </ligand>
</feature>
<feature type="binding site" evidence="1">
    <location>
        <position position="68"/>
    </location>
    <ligand>
        <name>ATP</name>
        <dbReference type="ChEBI" id="CHEBI:30616"/>
    </ligand>
</feature>
<feature type="binding site" evidence="1">
    <location>
        <begin position="129"/>
        <end position="131"/>
    </location>
    <ligand>
        <name>ATP</name>
        <dbReference type="ChEBI" id="CHEBI:30616"/>
    </ligand>
</feature>
<feature type="binding site" evidence="1">
    <location>
        <position position="172"/>
    </location>
    <ligand>
        <name>ATP</name>
        <dbReference type="ChEBI" id="CHEBI:30616"/>
    </ligand>
</feature>
<feature type="binding site" evidence="1">
    <location>
        <position position="182"/>
    </location>
    <ligand>
        <name>ATP</name>
        <dbReference type="ChEBI" id="CHEBI:30616"/>
    </ligand>
</feature>
<feature type="binding site" evidence="1">
    <location>
        <position position="219"/>
    </location>
    <ligand>
        <name>ATP</name>
        <dbReference type="ChEBI" id="CHEBI:30616"/>
    </ligand>
</feature>
<feature type="binding site" evidence="1">
    <location>
        <position position="292"/>
    </location>
    <ligand>
        <name>DNA</name>
        <dbReference type="ChEBI" id="CHEBI:16991"/>
    </ligand>
</feature>
<feature type="binding site" evidence="1">
    <location>
        <position position="311"/>
    </location>
    <ligand>
        <name>DNA</name>
        <dbReference type="ChEBI" id="CHEBI:16991"/>
    </ligand>
</feature>
<feature type="binding site" evidence="1">
    <location>
        <position position="316"/>
    </location>
    <ligand>
        <name>DNA</name>
        <dbReference type="ChEBI" id="CHEBI:16991"/>
    </ligand>
</feature>
<sequence>MNERMVDQSMHSEETDFELSLRPTRLRQYIGQNSIKSNLEVFIKAAKLRHEPLDHVLLFGPPGLGKTTLSNIIANEMEVNIRTVSGPSLERPGDLAAILSGLQPGDVLFIDEIHRLSSVVEEVLYPAMEDFFLDIIIGKGDEARSIRIDLPPFTLVGATTRAGSLTGPLRDRFGVHLRLEYYNESDLKEIIIRTAEVLGTGIDEESAIELAKRSRGTPRVANRLLKRVRDFQQVNEDEQIYIETTKHALGLLQVDQHGLDYIDHKMMNCIIKQYNGGPVGLDTIAVTIGEERITIEDVYEPFLIQKGFLERTPRGRKATPLAYEHFAKSNEERG</sequence>
<gene>
    <name evidence="1" type="primary">ruvB</name>
    <name type="ordered locus">SAV1641</name>
</gene>
<dbReference type="EC" id="3.6.4.-" evidence="1"/>
<dbReference type="EMBL" id="BA000017">
    <property type="protein sequence ID" value="BAB57803.1"/>
    <property type="molecule type" value="Genomic_DNA"/>
</dbReference>
<dbReference type="RefSeq" id="WP_001005768.1">
    <property type="nucleotide sequence ID" value="NC_002758.2"/>
</dbReference>
<dbReference type="SMR" id="P66757"/>
<dbReference type="KEGG" id="sav:SAV1641"/>
<dbReference type="HOGENOM" id="CLU_055599_1_0_9"/>
<dbReference type="PhylomeDB" id="P66757"/>
<dbReference type="Proteomes" id="UP000002481">
    <property type="component" value="Chromosome"/>
</dbReference>
<dbReference type="GO" id="GO:0005737">
    <property type="term" value="C:cytoplasm"/>
    <property type="evidence" value="ECO:0007669"/>
    <property type="project" value="UniProtKB-SubCell"/>
</dbReference>
<dbReference type="GO" id="GO:0048476">
    <property type="term" value="C:Holliday junction resolvase complex"/>
    <property type="evidence" value="ECO:0007669"/>
    <property type="project" value="UniProtKB-UniRule"/>
</dbReference>
<dbReference type="GO" id="GO:0005524">
    <property type="term" value="F:ATP binding"/>
    <property type="evidence" value="ECO:0007669"/>
    <property type="project" value="UniProtKB-UniRule"/>
</dbReference>
<dbReference type="GO" id="GO:0016887">
    <property type="term" value="F:ATP hydrolysis activity"/>
    <property type="evidence" value="ECO:0007669"/>
    <property type="project" value="InterPro"/>
</dbReference>
<dbReference type="GO" id="GO:0000400">
    <property type="term" value="F:four-way junction DNA binding"/>
    <property type="evidence" value="ECO:0007669"/>
    <property type="project" value="UniProtKB-UniRule"/>
</dbReference>
<dbReference type="GO" id="GO:0009378">
    <property type="term" value="F:four-way junction helicase activity"/>
    <property type="evidence" value="ECO:0007669"/>
    <property type="project" value="InterPro"/>
</dbReference>
<dbReference type="GO" id="GO:0006310">
    <property type="term" value="P:DNA recombination"/>
    <property type="evidence" value="ECO:0007669"/>
    <property type="project" value="UniProtKB-UniRule"/>
</dbReference>
<dbReference type="GO" id="GO:0006281">
    <property type="term" value="P:DNA repair"/>
    <property type="evidence" value="ECO:0007669"/>
    <property type="project" value="UniProtKB-UniRule"/>
</dbReference>
<dbReference type="CDD" id="cd00009">
    <property type="entry name" value="AAA"/>
    <property type="match status" value="1"/>
</dbReference>
<dbReference type="Gene3D" id="1.10.8.60">
    <property type="match status" value="1"/>
</dbReference>
<dbReference type="Gene3D" id="3.40.50.300">
    <property type="entry name" value="P-loop containing nucleotide triphosphate hydrolases"/>
    <property type="match status" value="1"/>
</dbReference>
<dbReference type="Gene3D" id="1.10.10.10">
    <property type="entry name" value="Winged helix-like DNA-binding domain superfamily/Winged helix DNA-binding domain"/>
    <property type="match status" value="1"/>
</dbReference>
<dbReference type="HAMAP" id="MF_00016">
    <property type="entry name" value="DNA_HJ_migration_RuvB"/>
    <property type="match status" value="1"/>
</dbReference>
<dbReference type="InterPro" id="IPR003593">
    <property type="entry name" value="AAA+_ATPase"/>
</dbReference>
<dbReference type="InterPro" id="IPR041445">
    <property type="entry name" value="AAA_lid_4"/>
</dbReference>
<dbReference type="InterPro" id="IPR004605">
    <property type="entry name" value="DNA_helicase_Holl-junc_RuvB"/>
</dbReference>
<dbReference type="InterPro" id="IPR027417">
    <property type="entry name" value="P-loop_NTPase"/>
</dbReference>
<dbReference type="InterPro" id="IPR008824">
    <property type="entry name" value="RuvB-like_N"/>
</dbReference>
<dbReference type="InterPro" id="IPR008823">
    <property type="entry name" value="RuvB_C"/>
</dbReference>
<dbReference type="InterPro" id="IPR036388">
    <property type="entry name" value="WH-like_DNA-bd_sf"/>
</dbReference>
<dbReference type="InterPro" id="IPR036390">
    <property type="entry name" value="WH_DNA-bd_sf"/>
</dbReference>
<dbReference type="NCBIfam" id="NF000868">
    <property type="entry name" value="PRK00080.1"/>
    <property type="match status" value="1"/>
</dbReference>
<dbReference type="NCBIfam" id="TIGR00635">
    <property type="entry name" value="ruvB"/>
    <property type="match status" value="1"/>
</dbReference>
<dbReference type="PANTHER" id="PTHR42848">
    <property type="match status" value="1"/>
</dbReference>
<dbReference type="PANTHER" id="PTHR42848:SF1">
    <property type="entry name" value="HOLLIDAY JUNCTION BRANCH MIGRATION COMPLEX SUBUNIT RUVB"/>
    <property type="match status" value="1"/>
</dbReference>
<dbReference type="Pfam" id="PF17864">
    <property type="entry name" value="AAA_lid_4"/>
    <property type="match status" value="1"/>
</dbReference>
<dbReference type="Pfam" id="PF05491">
    <property type="entry name" value="RuvB_C"/>
    <property type="match status" value="1"/>
</dbReference>
<dbReference type="Pfam" id="PF05496">
    <property type="entry name" value="RuvB_N"/>
    <property type="match status" value="1"/>
</dbReference>
<dbReference type="SMART" id="SM00382">
    <property type="entry name" value="AAA"/>
    <property type="match status" value="1"/>
</dbReference>
<dbReference type="SUPFAM" id="SSF52540">
    <property type="entry name" value="P-loop containing nucleoside triphosphate hydrolases"/>
    <property type="match status" value="1"/>
</dbReference>
<dbReference type="SUPFAM" id="SSF46785">
    <property type="entry name" value="Winged helix' DNA-binding domain"/>
    <property type="match status" value="1"/>
</dbReference>
<comment type="function">
    <text evidence="1">The RuvA-RuvB-RuvC complex processes Holliday junction (HJ) DNA during genetic recombination and DNA repair, while the RuvA-RuvB complex plays an important role in the rescue of blocked DNA replication forks via replication fork reversal (RFR). RuvA specifically binds to HJ cruciform DNA, conferring on it an open structure. The RuvB hexamer acts as an ATP-dependent pump, pulling dsDNA into and through the RuvAB complex. RuvB forms 2 homohexamers on either side of HJ DNA bound by 1 or 2 RuvA tetramers; 4 subunits per hexamer contact DNA at a time. Coordinated motions by a converter formed by DNA-disengaged RuvB subunits stimulates ATP hydrolysis and nucleotide exchange. Immobilization of the converter enables RuvB to convert the ATP-contained energy into a lever motion, pulling 2 nucleotides of DNA out of the RuvA tetramer per ATP hydrolyzed, thus driving DNA branch migration. The RuvB motors rotate together with the DNA substrate, which together with the progressing nucleotide cycle form the mechanistic basis for DNA recombination by continuous HJ branch migration. Branch migration allows RuvC to scan DNA until it finds its consensus sequence, where it cleaves and resolves cruciform DNA.</text>
</comment>
<comment type="catalytic activity">
    <reaction evidence="1">
        <text>ATP + H2O = ADP + phosphate + H(+)</text>
        <dbReference type="Rhea" id="RHEA:13065"/>
        <dbReference type="ChEBI" id="CHEBI:15377"/>
        <dbReference type="ChEBI" id="CHEBI:15378"/>
        <dbReference type="ChEBI" id="CHEBI:30616"/>
        <dbReference type="ChEBI" id="CHEBI:43474"/>
        <dbReference type="ChEBI" id="CHEBI:456216"/>
    </reaction>
</comment>
<comment type="subunit">
    <text evidence="1">Homohexamer. Forms an RuvA(8)-RuvB(12)-Holliday junction (HJ) complex. HJ DNA is sandwiched between 2 RuvA tetramers; dsDNA enters through RuvA and exits via RuvB. An RuvB hexamer assembles on each DNA strand where it exits the tetramer. Each RuvB hexamer is contacted by two RuvA subunits (via domain III) on 2 adjacent RuvB subunits; this complex drives branch migration. In the full resolvosome a probable DNA-RuvA(4)-RuvB(12)-RuvC(2) complex forms which resolves the HJ.</text>
</comment>
<comment type="subcellular location">
    <subcellularLocation>
        <location evidence="1">Cytoplasm</location>
    </subcellularLocation>
</comment>
<comment type="domain">
    <text evidence="1">Has 3 domains, the large (RuvB-L) and small ATPase (RuvB-S) domains and the C-terminal head (RuvB-H) domain. The head domain binds DNA, while the ATPase domains jointly bind ATP, ADP or are empty depending on the state of the subunit in the translocation cycle. During a single DNA translocation step the structure of each domain remains the same, but their relative positions change.</text>
</comment>
<comment type="similarity">
    <text evidence="1">Belongs to the RuvB family.</text>
</comment>
<reference key="1">
    <citation type="journal article" date="2001" name="Lancet">
        <title>Whole genome sequencing of meticillin-resistant Staphylococcus aureus.</title>
        <authorList>
            <person name="Kuroda M."/>
            <person name="Ohta T."/>
            <person name="Uchiyama I."/>
            <person name="Baba T."/>
            <person name="Yuzawa H."/>
            <person name="Kobayashi I."/>
            <person name="Cui L."/>
            <person name="Oguchi A."/>
            <person name="Aoki K."/>
            <person name="Nagai Y."/>
            <person name="Lian J.-Q."/>
            <person name="Ito T."/>
            <person name="Kanamori M."/>
            <person name="Matsumaru H."/>
            <person name="Maruyama A."/>
            <person name="Murakami H."/>
            <person name="Hosoyama A."/>
            <person name="Mizutani-Ui Y."/>
            <person name="Takahashi N.K."/>
            <person name="Sawano T."/>
            <person name="Inoue R."/>
            <person name="Kaito C."/>
            <person name="Sekimizu K."/>
            <person name="Hirakawa H."/>
            <person name="Kuhara S."/>
            <person name="Goto S."/>
            <person name="Yabuzaki J."/>
            <person name="Kanehisa M."/>
            <person name="Yamashita A."/>
            <person name="Oshima K."/>
            <person name="Furuya K."/>
            <person name="Yoshino C."/>
            <person name="Shiba T."/>
            <person name="Hattori M."/>
            <person name="Ogasawara N."/>
            <person name="Hayashi H."/>
            <person name="Hiramatsu K."/>
        </authorList>
    </citation>
    <scope>NUCLEOTIDE SEQUENCE [LARGE SCALE GENOMIC DNA]</scope>
    <source>
        <strain>Mu50 / ATCC 700699</strain>
    </source>
</reference>
<organism>
    <name type="scientific">Staphylococcus aureus (strain Mu50 / ATCC 700699)</name>
    <dbReference type="NCBI Taxonomy" id="158878"/>
    <lineage>
        <taxon>Bacteria</taxon>
        <taxon>Bacillati</taxon>
        <taxon>Bacillota</taxon>
        <taxon>Bacilli</taxon>
        <taxon>Bacillales</taxon>
        <taxon>Staphylococcaceae</taxon>
        <taxon>Staphylococcus</taxon>
    </lineage>
</organism>